<organism>
    <name type="scientific">Clostridium acetobutylicum (strain ATCC 824 / DSM 792 / JCM 1419 / IAM 19013 / LMG 5710 / NBRC 13948 / NRRL B-527 / VKM B-1787 / 2291 / W)</name>
    <dbReference type="NCBI Taxonomy" id="272562"/>
    <lineage>
        <taxon>Bacteria</taxon>
        <taxon>Bacillati</taxon>
        <taxon>Bacillota</taxon>
        <taxon>Clostridia</taxon>
        <taxon>Eubacteriales</taxon>
        <taxon>Clostridiaceae</taxon>
        <taxon>Clostridium</taxon>
    </lineage>
</organism>
<gene>
    <name evidence="1" type="primary">smpB</name>
    <name type="ordered locus">CA_C0716</name>
</gene>
<dbReference type="EMBL" id="AE001437">
    <property type="protein sequence ID" value="AAK78693.1"/>
    <property type="molecule type" value="Genomic_DNA"/>
</dbReference>
<dbReference type="PIR" id="B96988">
    <property type="entry name" value="B96988"/>
</dbReference>
<dbReference type="RefSeq" id="NP_347353.1">
    <property type="nucleotide sequence ID" value="NC_003030.1"/>
</dbReference>
<dbReference type="RefSeq" id="WP_010964035.1">
    <property type="nucleotide sequence ID" value="NC_003030.1"/>
</dbReference>
<dbReference type="SMR" id="Q97L49"/>
<dbReference type="STRING" id="272562.CA_C0716"/>
<dbReference type="GeneID" id="44997227"/>
<dbReference type="KEGG" id="cac:CA_C0716"/>
<dbReference type="PATRIC" id="fig|272562.8.peg.919"/>
<dbReference type="eggNOG" id="COG0691">
    <property type="taxonomic scope" value="Bacteria"/>
</dbReference>
<dbReference type="HOGENOM" id="CLU_108953_0_0_9"/>
<dbReference type="OrthoDB" id="9805462at2"/>
<dbReference type="Proteomes" id="UP000000814">
    <property type="component" value="Chromosome"/>
</dbReference>
<dbReference type="GO" id="GO:0005829">
    <property type="term" value="C:cytosol"/>
    <property type="evidence" value="ECO:0007669"/>
    <property type="project" value="TreeGrafter"/>
</dbReference>
<dbReference type="GO" id="GO:0003723">
    <property type="term" value="F:RNA binding"/>
    <property type="evidence" value="ECO:0007669"/>
    <property type="project" value="UniProtKB-UniRule"/>
</dbReference>
<dbReference type="GO" id="GO:0070929">
    <property type="term" value="P:trans-translation"/>
    <property type="evidence" value="ECO:0007669"/>
    <property type="project" value="UniProtKB-UniRule"/>
</dbReference>
<dbReference type="CDD" id="cd09294">
    <property type="entry name" value="SmpB"/>
    <property type="match status" value="1"/>
</dbReference>
<dbReference type="Gene3D" id="2.40.280.10">
    <property type="match status" value="1"/>
</dbReference>
<dbReference type="HAMAP" id="MF_00023">
    <property type="entry name" value="SmpB"/>
    <property type="match status" value="1"/>
</dbReference>
<dbReference type="InterPro" id="IPR023620">
    <property type="entry name" value="SmpB"/>
</dbReference>
<dbReference type="InterPro" id="IPR000037">
    <property type="entry name" value="SsrA-bd_prot"/>
</dbReference>
<dbReference type="InterPro" id="IPR020081">
    <property type="entry name" value="SsrA-bd_prot_CS"/>
</dbReference>
<dbReference type="NCBIfam" id="NF003843">
    <property type="entry name" value="PRK05422.1"/>
    <property type="match status" value="1"/>
</dbReference>
<dbReference type="NCBIfam" id="TIGR00086">
    <property type="entry name" value="smpB"/>
    <property type="match status" value="1"/>
</dbReference>
<dbReference type="PANTHER" id="PTHR30308:SF2">
    <property type="entry name" value="SSRA-BINDING PROTEIN"/>
    <property type="match status" value="1"/>
</dbReference>
<dbReference type="PANTHER" id="PTHR30308">
    <property type="entry name" value="TMRNA-BINDING COMPONENT OF TRANS-TRANSLATION TAGGING COMPLEX"/>
    <property type="match status" value="1"/>
</dbReference>
<dbReference type="Pfam" id="PF01668">
    <property type="entry name" value="SmpB"/>
    <property type="match status" value="1"/>
</dbReference>
<dbReference type="SUPFAM" id="SSF74982">
    <property type="entry name" value="Small protein B (SmpB)"/>
    <property type="match status" value="1"/>
</dbReference>
<dbReference type="PROSITE" id="PS01317">
    <property type="entry name" value="SSRP"/>
    <property type="match status" value="1"/>
</dbReference>
<protein>
    <recommendedName>
        <fullName evidence="1">SsrA-binding protein</fullName>
    </recommendedName>
    <alternativeName>
        <fullName evidence="1">Small protein B</fullName>
    </alternativeName>
</protein>
<sequence>MAKKNTENNTLADNRKAWHDYFIEETYECGVELVGTEVKSIKNGKANLKDSYAEIRNGEVFACNMHVSPYKEGNIFNVDPLRKRRLLLHKSEIDKLLGFTSQKGYTLVPIALYLKNRRVKVKLAVAVGKKNYDKRDALKEKDARREIDRAMKNNR</sequence>
<comment type="function">
    <text evidence="1">Required for rescue of stalled ribosomes mediated by trans-translation. Binds to transfer-messenger RNA (tmRNA), required for stable association of tmRNA with ribosomes. tmRNA and SmpB together mimic tRNA shape, replacing the anticodon stem-loop with SmpB. tmRNA is encoded by the ssrA gene; the 2 termini fold to resemble tRNA(Ala) and it encodes a 'tag peptide', a short internal open reading frame. During trans-translation Ala-aminoacylated tmRNA acts like a tRNA, entering the A-site of stalled ribosomes, displacing the stalled mRNA. The ribosome then switches to translate the ORF on the tmRNA; the nascent peptide is terminated with the 'tag peptide' encoded by the tmRNA and targeted for degradation. The ribosome is freed to recommence translation, which seems to be the essential function of trans-translation.</text>
</comment>
<comment type="subcellular location">
    <subcellularLocation>
        <location evidence="1">Cytoplasm</location>
    </subcellularLocation>
    <text evidence="1">The tmRNA-SmpB complex associates with stalled 70S ribosomes.</text>
</comment>
<comment type="similarity">
    <text evidence="1">Belongs to the SmpB family.</text>
</comment>
<reference key="1">
    <citation type="journal article" date="2001" name="J. Bacteriol.">
        <title>Genome sequence and comparative analysis of the solvent-producing bacterium Clostridium acetobutylicum.</title>
        <authorList>
            <person name="Noelling J."/>
            <person name="Breton G."/>
            <person name="Omelchenko M.V."/>
            <person name="Makarova K.S."/>
            <person name="Zeng Q."/>
            <person name="Gibson R."/>
            <person name="Lee H.M."/>
            <person name="Dubois J."/>
            <person name="Qiu D."/>
            <person name="Hitti J."/>
            <person name="Wolf Y.I."/>
            <person name="Tatusov R.L."/>
            <person name="Sabathe F."/>
            <person name="Doucette-Stamm L.A."/>
            <person name="Soucaille P."/>
            <person name="Daly M.J."/>
            <person name="Bennett G.N."/>
            <person name="Koonin E.V."/>
            <person name="Smith D.R."/>
        </authorList>
    </citation>
    <scope>NUCLEOTIDE SEQUENCE [LARGE SCALE GENOMIC DNA]</scope>
    <source>
        <strain>ATCC 824 / DSM 792 / JCM 1419 / IAM 19013 / LMG 5710 / NBRC 13948 / NRRL B-527 / VKM B-1787 / 2291 / W</strain>
    </source>
</reference>
<accession>Q97L49</accession>
<name>SSRP_CLOAB</name>
<evidence type="ECO:0000255" key="1">
    <source>
        <dbReference type="HAMAP-Rule" id="MF_00023"/>
    </source>
</evidence>
<keyword id="KW-0963">Cytoplasm</keyword>
<keyword id="KW-1185">Reference proteome</keyword>
<keyword id="KW-0694">RNA-binding</keyword>
<feature type="chain" id="PRO_0000102934" description="SsrA-binding protein">
    <location>
        <begin position="1"/>
        <end position="155"/>
    </location>
</feature>
<proteinExistence type="inferred from homology"/>